<name>PSAL_SYNE7</name>
<dbReference type="EMBL" id="U62737">
    <property type="protein sequence ID" value="AAB50394.1"/>
    <property type="molecule type" value="Genomic_DNA"/>
</dbReference>
<dbReference type="EMBL" id="CP000100">
    <property type="protein sequence ID" value="ABB58372.1"/>
    <property type="molecule type" value="Genomic_DNA"/>
</dbReference>
<dbReference type="RefSeq" id="WP_011378415.1">
    <property type="nucleotide sequence ID" value="NZ_JACJTX010000001.1"/>
</dbReference>
<dbReference type="PDB" id="6KIF">
    <property type="method" value="EM"/>
    <property type="resolution" value="3.30 A"/>
    <property type="chains" value="L/V/n=1-166"/>
</dbReference>
<dbReference type="PDB" id="6KIG">
    <property type="method" value="EM"/>
    <property type="resolution" value="2.90 A"/>
    <property type="chains" value="L/V/n=1-166"/>
</dbReference>
<dbReference type="PDBsum" id="6KIF"/>
<dbReference type="PDBsum" id="6KIG"/>
<dbReference type="EMDB" id="EMD-9994"/>
<dbReference type="EMDB" id="EMD-9995"/>
<dbReference type="SMR" id="P95822"/>
<dbReference type="STRING" id="1140.Synpcc7942_2342"/>
<dbReference type="PaxDb" id="1140-Synpcc7942_2342"/>
<dbReference type="KEGG" id="syf:Synpcc7942_2342"/>
<dbReference type="eggNOG" id="ENOG502ZMJ2">
    <property type="taxonomic scope" value="Bacteria"/>
</dbReference>
<dbReference type="HOGENOM" id="CLU_092204_1_0_3"/>
<dbReference type="OrthoDB" id="464381at2"/>
<dbReference type="BioCyc" id="MetaCyc:SYNPCC7942_2342-MONOMER"/>
<dbReference type="BioCyc" id="SYNEL:SYNPCC7942_2342-MONOMER"/>
<dbReference type="Proteomes" id="UP000889800">
    <property type="component" value="Chromosome"/>
</dbReference>
<dbReference type="GO" id="GO:0009538">
    <property type="term" value="C:photosystem I reaction center"/>
    <property type="evidence" value="ECO:0007669"/>
    <property type="project" value="InterPro"/>
</dbReference>
<dbReference type="GO" id="GO:0031676">
    <property type="term" value="C:plasma membrane-derived thylakoid membrane"/>
    <property type="evidence" value="ECO:0007669"/>
    <property type="project" value="UniProtKB-SubCell"/>
</dbReference>
<dbReference type="GO" id="GO:0015979">
    <property type="term" value="P:photosynthesis"/>
    <property type="evidence" value="ECO:0007669"/>
    <property type="project" value="UniProtKB-UniRule"/>
</dbReference>
<dbReference type="Gene3D" id="1.20.1240.10">
    <property type="entry name" value="Photosystem I PsaL, reaction centre subunit XI"/>
    <property type="match status" value="1"/>
</dbReference>
<dbReference type="HAMAP" id="MF_00447">
    <property type="entry name" value="PSI_PsaL"/>
    <property type="match status" value="1"/>
</dbReference>
<dbReference type="InterPro" id="IPR003757">
    <property type="entry name" value="PSI_PsaL"/>
</dbReference>
<dbReference type="InterPro" id="IPR036592">
    <property type="entry name" value="PSI_PsaL_sf"/>
</dbReference>
<dbReference type="InterPro" id="IPR022980">
    <property type="entry name" value="PSI_suXI"/>
</dbReference>
<dbReference type="NCBIfam" id="NF001930">
    <property type="entry name" value="PRK00704.2-1"/>
    <property type="match status" value="1"/>
</dbReference>
<dbReference type="PANTHER" id="PTHR34803">
    <property type="entry name" value="PHOTOSYSTEM I REACTION CENTER SUBUNIT XI, CHLOROPLASTIC"/>
    <property type="match status" value="1"/>
</dbReference>
<dbReference type="PANTHER" id="PTHR34803:SF2">
    <property type="entry name" value="PHOTOSYSTEM I REACTION CENTER SUBUNIT XI, CHLOROPLASTIC"/>
    <property type="match status" value="1"/>
</dbReference>
<dbReference type="Pfam" id="PF02605">
    <property type="entry name" value="PsaL"/>
    <property type="match status" value="1"/>
</dbReference>
<dbReference type="SUPFAM" id="SSF81568">
    <property type="entry name" value="Photosystem I reaction center subunit XI, PsaL"/>
    <property type="match status" value="1"/>
</dbReference>
<proteinExistence type="evidence at protein level"/>
<protein>
    <recommendedName>
        <fullName>Photosystem I reaction center subunit XI</fullName>
    </recommendedName>
    <alternativeName>
        <fullName>PSI subunit V</fullName>
    </alternativeName>
    <alternativeName>
        <fullName>PSI-L</fullName>
    </alternativeName>
</protein>
<reference key="1">
    <citation type="submission" date="1996-09" db="EMBL/GenBank/DDBJ databases">
        <title>High CO2 requiring mutant of Synechococcus impaired in bicarbonate uptake obtained with the aid of an inactivation library.</title>
        <authorList>
            <person name="Ronen-Tarazi M."/>
            <person name="Kaplan A."/>
        </authorList>
    </citation>
    <scope>NUCLEOTIDE SEQUENCE [GENOMIC DNA]</scope>
</reference>
<reference key="2">
    <citation type="submission" date="2005-08" db="EMBL/GenBank/DDBJ databases">
        <title>Complete sequence of chromosome 1 of Synechococcus elongatus PCC 7942.</title>
        <authorList>
            <consortium name="US DOE Joint Genome Institute"/>
            <person name="Copeland A."/>
            <person name="Lucas S."/>
            <person name="Lapidus A."/>
            <person name="Barry K."/>
            <person name="Detter J.C."/>
            <person name="Glavina T."/>
            <person name="Hammon N."/>
            <person name="Israni S."/>
            <person name="Pitluck S."/>
            <person name="Schmutz J."/>
            <person name="Larimer F."/>
            <person name="Land M."/>
            <person name="Kyrpides N."/>
            <person name="Lykidis A."/>
            <person name="Golden S."/>
            <person name="Richardson P."/>
        </authorList>
    </citation>
    <scope>NUCLEOTIDE SEQUENCE [LARGE SCALE GENOMIC DNA]</scope>
    <source>
        <strain>ATCC 33912 / PCC 7942 / FACHB-805</strain>
    </source>
</reference>
<sequence>MAQDVIANGGTPEIGNLATPINSSPFTRTFINALPIYRRGLSSNRRGLEIGMAHGFLLYGPFSILGPLRNTETAGSAGLLATVGLVVILTVCLSLYGNAGSGPSAAESTVTTPNPPQELFTKEGWSEFTSGFILGGLGGAFFAFYLASTPYVQPLVKIAAGVWSVH</sequence>
<organism>
    <name type="scientific">Synechococcus elongatus (strain ATCC 33912 / PCC 7942 / FACHB-805)</name>
    <name type="common">Anacystis nidulans R2</name>
    <dbReference type="NCBI Taxonomy" id="1140"/>
    <lineage>
        <taxon>Bacteria</taxon>
        <taxon>Bacillati</taxon>
        <taxon>Cyanobacteriota</taxon>
        <taxon>Cyanophyceae</taxon>
        <taxon>Synechococcales</taxon>
        <taxon>Synechococcaceae</taxon>
        <taxon>Synechococcus</taxon>
    </lineage>
</organism>
<accession>P95822</accession>
<accession>P72550</accession>
<accession>Q31KP7</accession>
<gene>
    <name type="primary">psaL</name>
    <name type="ordered locus">Synpcc7942_2342</name>
</gene>
<evidence type="ECO:0000250" key="1"/>
<evidence type="ECO:0000255" key="2"/>
<evidence type="ECO:0000305" key="3"/>
<keyword id="KW-0002">3D-structure</keyword>
<keyword id="KW-0472">Membrane</keyword>
<keyword id="KW-0602">Photosynthesis</keyword>
<keyword id="KW-0603">Photosystem I</keyword>
<keyword id="KW-1185">Reference proteome</keyword>
<keyword id="KW-0793">Thylakoid</keyword>
<keyword id="KW-0812">Transmembrane</keyword>
<keyword id="KW-1133">Transmembrane helix</keyword>
<comment type="subcellular location">
    <subcellularLocation>
        <location evidence="1">Cellular thylakoid membrane</location>
        <topology evidence="1">Multi-pass membrane protein</topology>
    </subcellularLocation>
</comment>
<comment type="similarity">
    <text evidence="3">Belongs to the PsaL family.</text>
</comment>
<feature type="chain" id="PRO_0000194702" description="Photosystem I reaction center subunit XI">
    <location>
        <begin position="1"/>
        <end position="166"/>
    </location>
</feature>
<feature type="transmembrane region" description="Helical" evidence="2">
    <location>
        <begin position="77"/>
        <end position="97"/>
    </location>
</feature>
<feature type="transmembrane region" description="Helical" evidence="2">
    <location>
        <begin position="128"/>
        <end position="148"/>
    </location>
</feature>